<name>DAPA_GEODF</name>
<organism>
    <name type="scientific">Geotalea daltonii (strain DSM 22248 / JCM 15807 / FRC-32)</name>
    <name type="common">Geobacter daltonii</name>
    <dbReference type="NCBI Taxonomy" id="316067"/>
    <lineage>
        <taxon>Bacteria</taxon>
        <taxon>Pseudomonadati</taxon>
        <taxon>Thermodesulfobacteriota</taxon>
        <taxon>Desulfuromonadia</taxon>
        <taxon>Geobacterales</taxon>
        <taxon>Geobacteraceae</taxon>
        <taxon>Geotalea</taxon>
    </lineage>
</organism>
<evidence type="ECO:0000255" key="1">
    <source>
        <dbReference type="HAMAP-Rule" id="MF_00418"/>
    </source>
</evidence>
<evidence type="ECO:0000305" key="2"/>
<keyword id="KW-0028">Amino-acid biosynthesis</keyword>
<keyword id="KW-0963">Cytoplasm</keyword>
<keyword id="KW-0220">Diaminopimelate biosynthesis</keyword>
<keyword id="KW-0456">Lyase</keyword>
<keyword id="KW-0457">Lysine biosynthesis</keyword>
<keyword id="KW-1185">Reference proteome</keyword>
<keyword id="KW-0704">Schiff base</keyword>
<proteinExistence type="inferred from homology"/>
<protein>
    <recommendedName>
        <fullName evidence="1">4-hydroxy-tetrahydrodipicolinate synthase</fullName>
        <shortName evidence="1">HTPA synthase</shortName>
        <ecNumber evidence="1">4.3.3.7</ecNumber>
    </recommendedName>
</protein>
<sequence length="290" mass="31369">MFKGSIVAIVTPFNKGVVDEKKLRELVEFQIAGGTDAIVPCGTTGESSTLDYEEHDRVIEIVVQQVNKRVPVIAGTGSNSTREAIEMTEHAKQLGADGALLVTPYYNKPTQEGLYRHYMAVAEAVALPQILYNVPGRTGVNLLPETVARLAEHKNIVAIKEATGSLQQASEVLALCGDKIDVLCGDDFITFPMMACGAKGVISVVANIMPKEVAALVDAFFAGKMEEARQWHLKLLKISNAMFIESNPVPVKTAVGLMGKASDEVRLPLAPMSDANKNKLISVMKEYKLI</sequence>
<comment type="function">
    <text evidence="1">Catalyzes the condensation of (S)-aspartate-beta-semialdehyde [(S)-ASA] and pyruvate to 4-hydroxy-tetrahydrodipicolinate (HTPA).</text>
</comment>
<comment type="catalytic activity">
    <reaction evidence="1">
        <text>L-aspartate 4-semialdehyde + pyruvate = (2S,4S)-4-hydroxy-2,3,4,5-tetrahydrodipicolinate + H2O + H(+)</text>
        <dbReference type="Rhea" id="RHEA:34171"/>
        <dbReference type="ChEBI" id="CHEBI:15361"/>
        <dbReference type="ChEBI" id="CHEBI:15377"/>
        <dbReference type="ChEBI" id="CHEBI:15378"/>
        <dbReference type="ChEBI" id="CHEBI:67139"/>
        <dbReference type="ChEBI" id="CHEBI:537519"/>
        <dbReference type="EC" id="4.3.3.7"/>
    </reaction>
</comment>
<comment type="pathway">
    <text evidence="1">Amino-acid biosynthesis; L-lysine biosynthesis via DAP pathway; (S)-tetrahydrodipicolinate from L-aspartate: step 3/4.</text>
</comment>
<comment type="subunit">
    <text evidence="1">Homotetramer; dimer of dimers.</text>
</comment>
<comment type="subcellular location">
    <subcellularLocation>
        <location evidence="1">Cytoplasm</location>
    </subcellularLocation>
</comment>
<comment type="similarity">
    <text evidence="1">Belongs to the DapA family.</text>
</comment>
<comment type="caution">
    <text evidence="2">Was originally thought to be a dihydrodipicolinate synthase (DHDPS), catalyzing the condensation of (S)-aspartate-beta-semialdehyde [(S)-ASA] and pyruvate to dihydrodipicolinate (DHDP). However, it was shown in E.coli that the product of the enzymatic reaction is not dihydrodipicolinate but in fact (4S)-4-hydroxy-2,3,4,5-tetrahydro-(2S)-dipicolinic acid (HTPA), and that the consecutive dehydration reaction leading to DHDP is not spontaneous but catalyzed by DapB.</text>
</comment>
<feature type="chain" id="PRO_1000134868" description="4-hydroxy-tetrahydrodipicolinate synthase">
    <location>
        <begin position="1"/>
        <end position="290"/>
    </location>
</feature>
<feature type="active site" description="Proton donor/acceptor" evidence="1">
    <location>
        <position position="132"/>
    </location>
</feature>
<feature type="active site" description="Schiff-base intermediate with substrate" evidence="1">
    <location>
        <position position="160"/>
    </location>
</feature>
<feature type="binding site" evidence="1">
    <location>
        <position position="44"/>
    </location>
    <ligand>
        <name>pyruvate</name>
        <dbReference type="ChEBI" id="CHEBI:15361"/>
    </ligand>
</feature>
<feature type="binding site" evidence="1">
    <location>
        <position position="202"/>
    </location>
    <ligand>
        <name>pyruvate</name>
        <dbReference type="ChEBI" id="CHEBI:15361"/>
    </ligand>
</feature>
<feature type="site" description="Part of a proton relay during catalysis" evidence="1">
    <location>
        <position position="43"/>
    </location>
</feature>
<feature type="site" description="Part of a proton relay during catalysis" evidence="1">
    <location>
        <position position="106"/>
    </location>
</feature>
<accession>B9M380</accession>
<gene>
    <name evidence="1" type="primary">dapA</name>
    <name type="ordered locus">Geob_1130</name>
</gene>
<dbReference type="EC" id="4.3.3.7" evidence="1"/>
<dbReference type="EMBL" id="CP001390">
    <property type="protein sequence ID" value="ACM19490.1"/>
    <property type="molecule type" value="Genomic_DNA"/>
</dbReference>
<dbReference type="RefSeq" id="WP_012646219.1">
    <property type="nucleotide sequence ID" value="NC_011979.1"/>
</dbReference>
<dbReference type="SMR" id="B9M380"/>
<dbReference type="STRING" id="316067.Geob_1130"/>
<dbReference type="KEGG" id="geo:Geob_1130"/>
<dbReference type="eggNOG" id="COG0329">
    <property type="taxonomic scope" value="Bacteria"/>
</dbReference>
<dbReference type="HOGENOM" id="CLU_049343_7_1_7"/>
<dbReference type="OrthoDB" id="9782828at2"/>
<dbReference type="UniPathway" id="UPA00034">
    <property type="reaction ID" value="UER00017"/>
</dbReference>
<dbReference type="Proteomes" id="UP000007721">
    <property type="component" value="Chromosome"/>
</dbReference>
<dbReference type="GO" id="GO:0005829">
    <property type="term" value="C:cytosol"/>
    <property type="evidence" value="ECO:0007669"/>
    <property type="project" value="TreeGrafter"/>
</dbReference>
<dbReference type="GO" id="GO:0008840">
    <property type="term" value="F:4-hydroxy-tetrahydrodipicolinate synthase activity"/>
    <property type="evidence" value="ECO:0007669"/>
    <property type="project" value="UniProtKB-UniRule"/>
</dbReference>
<dbReference type="GO" id="GO:0019877">
    <property type="term" value="P:diaminopimelate biosynthetic process"/>
    <property type="evidence" value="ECO:0007669"/>
    <property type="project" value="UniProtKB-UniRule"/>
</dbReference>
<dbReference type="GO" id="GO:0009089">
    <property type="term" value="P:lysine biosynthetic process via diaminopimelate"/>
    <property type="evidence" value="ECO:0007669"/>
    <property type="project" value="UniProtKB-UniRule"/>
</dbReference>
<dbReference type="CDD" id="cd00950">
    <property type="entry name" value="DHDPS"/>
    <property type="match status" value="1"/>
</dbReference>
<dbReference type="Gene3D" id="3.20.20.70">
    <property type="entry name" value="Aldolase class I"/>
    <property type="match status" value="1"/>
</dbReference>
<dbReference type="HAMAP" id="MF_00418">
    <property type="entry name" value="DapA"/>
    <property type="match status" value="1"/>
</dbReference>
<dbReference type="InterPro" id="IPR013785">
    <property type="entry name" value="Aldolase_TIM"/>
</dbReference>
<dbReference type="InterPro" id="IPR005263">
    <property type="entry name" value="DapA"/>
</dbReference>
<dbReference type="InterPro" id="IPR002220">
    <property type="entry name" value="DapA-like"/>
</dbReference>
<dbReference type="InterPro" id="IPR020625">
    <property type="entry name" value="Schiff_base-form_aldolases_AS"/>
</dbReference>
<dbReference type="InterPro" id="IPR020624">
    <property type="entry name" value="Schiff_base-form_aldolases_CS"/>
</dbReference>
<dbReference type="NCBIfam" id="TIGR00674">
    <property type="entry name" value="dapA"/>
    <property type="match status" value="1"/>
</dbReference>
<dbReference type="PANTHER" id="PTHR12128:SF66">
    <property type="entry name" value="4-HYDROXY-2-OXOGLUTARATE ALDOLASE, MITOCHONDRIAL"/>
    <property type="match status" value="1"/>
</dbReference>
<dbReference type="PANTHER" id="PTHR12128">
    <property type="entry name" value="DIHYDRODIPICOLINATE SYNTHASE"/>
    <property type="match status" value="1"/>
</dbReference>
<dbReference type="Pfam" id="PF00701">
    <property type="entry name" value="DHDPS"/>
    <property type="match status" value="1"/>
</dbReference>
<dbReference type="PIRSF" id="PIRSF001365">
    <property type="entry name" value="DHDPS"/>
    <property type="match status" value="1"/>
</dbReference>
<dbReference type="PRINTS" id="PR00146">
    <property type="entry name" value="DHPICSNTHASE"/>
</dbReference>
<dbReference type="SMART" id="SM01130">
    <property type="entry name" value="DHDPS"/>
    <property type="match status" value="1"/>
</dbReference>
<dbReference type="SUPFAM" id="SSF51569">
    <property type="entry name" value="Aldolase"/>
    <property type="match status" value="1"/>
</dbReference>
<dbReference type="PROSITE" id="PS00665">
    <property type="entry name" value="DHDPS_1"/>
    <property type="match status" value="1"/>
</dbReference>
<dbReference type="PROSITE" id="PS00666">
    <property type="entry name" value="DHDPS_2"/>
    <property type="match status" value="1"/>
</dbReference>
<reference key="1">
    <citation type="submission" date="2009-01" db="EMBL/GenBank/DDBJ databases">
        <title>Complete sequence of Geobacter sp. FRC-32.</title>
        <authorList>
            <consortium name="US DOE Joint Genome Institute"/>
            <person name="Lucas S."/>
            <person name="Copeland A."/>
            <person name="Lapidus A."/>
            <person name="Glavina del Rio T."/>
            <person name="Dalin E."/>
            <person name="Tice H."/>
            <person name="Bruce D."/>
            <person name="Goodwin L."/>
            <person name="Pitluck S."/>
            <person name="Saunders E."/>
            <person name="Brettin T."/>
            <person name="Detter J.C."/>
            <person name="Han C."/>
            <person name="Larimer F."/>
            <person name="Land M."/>
            <person name="Hauser L."/>
            <person name="Kyrpides N."/>
            <person name="Ovchinnikova G."/>
            <person name="Kostka J."/>
            <person name="Richardson P."/>
        </authorList>
    </citation>
    <scope>NUCLEOTIDE SEQUENCE [LARGE SCALE GENOMIC DNA]</scope>
    <source>
        <strain>DSM 22248 / JCM 15807 / FRC-32</strain>
    </source>
</reference>